<proteinExistence type="evidence at protein level"/>
<organism>
    <name type="scientific">Homo sapiens</name>
    <name type="common">Human</name>
    <dbReference type="NCBI Taxonomy" id="9606"/>
    <lineage>
        <taxon>Eukaryota</taxon>
        <taxon>Metazoa</taxon>
        <taxon>Chordata</taxon>
        <taxon>Craniata</taxon>
        <taxon>Vertebrata</taxon>
        <taxon>Euteleostomi</taxon>
        <taxon>Mammalia</taxon>
        <taxon>Eutheria</taxon>
        <taxon>Euarchontoglires</taxon>
        <taxon>Primates</taxon>
        <taxon>Haplorrhini</taxon>
        <taxon>Catarrhini</taxon>
        <taxon>Hominidae</taxon>
        <taxon>Homo</taxon>
    </lineage>
</organism>
<sequence>MDRKVAREFRHKVDFLIENDAEKDYLYDVLRMYHQTMDVAVLVGDLKLVINEPSRLPLFDAIRPLIPLKHQVEYDQLTPRRSRKLKEVRLDRLHPEGLGLSVRGGLEFGCGLFISHLIKGGQADSVGLQVGDEIVRINGYSISSCTHEEVINLIRTKKTVSIKVRHIGLIPVKSSPDEPLTWQYVDQFVSESGGVRGSLGSPGNRENKEKKVFISLVGSRGLGCSISSGPIQKPGIFISHVKPGSLSAEVGLEIGDQIVEVNGVDFSNLDHKEAVNVLKSSRSLTISIVAAAGRELFMTDRERLAEARQRELQRQELLMQKRLAMESNKILQEQQEMERQRRKEIAQKAAEENERYRKEMEQIVEEEEKFKKQWEEDWGSKEQLLLPKTITAEVHPVPLRKPKYDQGVEPELEPADDLDGGTEEQGEQDFRKYEEGFDPYSMFTPEQIMGKDVRLLRIKKEGSLDLALEGGVDSPIGKVVVSAVYERGAAERHGGIVKGDEIMAINGKIVTDYTLAEAEAALQKAWNQGGDWIDLVVAVCPPKEYDDELTFF</sequence>
<comment type="function">
    <text evidence="1 16 18">Anchoring/scaffolding protein that is a part of the functional network formed by USH1C, USH1G, CDH23 and MYO7A that mediates mechanotransduction in cochlear hair cells. Required for normal development and maintenance of cochlear hair cell bundles (By similarity). As part of the intermicrovillar adhesion complex/IMAC plays a role in brush border differentiation, controlling microvilli organization and length. Probably plays a central regulatory role in the assembly of the complex, recruiting CDHR2, CDHR5 and MYO7B to the microvilli tips (PubMed:24725409, PubMed:26812018).</text>
</comment>
<comment type="subunit">
    <text evidence="1 6 8 11 12 13 14 15 16 17 18 19 25 26">Part of the IMAC/intermicrovillar adhesion complex/intermicrovillar tip-link complex composed of ANKS4B, MYO7B, USH1C, CDHR2 and CDHR5 (PubMed:24725409, PubMed:26812018, PubMed:32209652). Part of a complex composed of USH1C, USH1G and MYO7A (PubMed:21709241). Interacts with F-actin (By similarity). Interacts with USH2A (PubMed:16301216). Interacts with SLC4A7 (PubMed:16301216). Interacts (via PDZ1 domain) with the C-terminus of USHBP1 (PubMed:11311560). Interacts (via N-terminus and PDZ 2 domain) with CDH23 (PubMed:19297620). Interacts with USH1G (PubMed:12588794, PubMed:20142502). Interacts with MYO7B (PubMed:24725409, PubMed:26812017). Interacts with CDHR2 and CDHR5; may mediate their interaction with MYO7B at the microvilli tip (PubMed:24725409, PubMed:26812017). Interacts (via PDZ 1 domain) with ANKS4B (PubMed:26812017, PubMed:26812018). Interacts (via PDZ 1 domain) with DOCK4 (PubMed:16464467).</text>
</comment>
<comment type="interaction">
    <interactant intactId="EBI-954308">
        <id>Q9Y6N9</id>
    </interactant>
    <interactant intactId="EBI-514206">
        <id>Q9UBT7</id>
        <label>CTNNAL1</label>
    </interactant>
    <organismsDiffer>false</organismsDiffer>
    <experiments>3</experiments>
</comment>
<comment type="interaction">
    <interactant intactId="EBI-954308">
        <id>Q9Y6N9</id>
    </interactant>
    <interactant intactId="EBI-2548751">
        <id>Q8TD10</id>
        <label>MIPOL1</label>
    </interactant>
    <organismsDiffer>false</organismsDiffer>
    <experiments>3</experiments>
</comment>
<comment type="interaction">
    <interactant intactId="EBI-954308">
        <id>Q9Y6N9</id>
    </interactant>
    <interactant intactId="EBI-413628">
        <id>P63000</id>
        <label>RAC1</label>
    </interactant>
    <organismsDiffer>false</organismsDiffer>
    <experiments>3</experiments>
</comment>
<comment type="interaction">
    <interactant intactId="EBI-954308">
        <id>Q9Y6N9</id>
    </interactant>
    <interactant intactId="EBI-8601749">
        <id>Q495M9</id>
        <label>USH1G</label>
    </interactant>
    <organismsDiffer>false</organismsDiffer>
    <experiments>14</experiments>
</comment>
<comment type="interaction">
    <interactant intactId="EBI-9541226">
        <id>Q9Y6N9-1</id>
    </interactant>
    <interactant intactId="EBI-493793">
        <id>Q9BYE9</id>
        <label>CDHR2</label>
    </interactant>
    <organismsDiffer>false</organismsDiffer>
    <experiments>2</experiments>
</comment>
<comment type="interaction">
    <interactant intactId="EBI-9541226">
        <id>Q9Y6N9-1</id>
    </interactant>
    <interactant intactId="EBI-9540696">
        <id>Q9HBB8</id>
        <label>CDHR5</label>
    </interactant>
    <organismsDiffer>false</organismsDiffer>
    <experiments>2</experiments>
</comment>
<comment type="interaction">
    <interactant intactId="EBI-11523636">
        <id>Q9Y6N9-4</id>
    </interactant>
    <interactant intactId="EBI-11621707">
        <id>Q8WXG9-1</id>
        <label>ADGRV1</label>
    </interactant>
    <organismsDiffer>false</organismsDiffer>
    <experiments>3</experiments>
</comment>
<comment type="interaction">
    <interactant intactId="EBI-11523636">
        <id>Q9Y6N9-4</id>
    </interactant>
    <interactant intactId="EBI-9658517">
        <id>Q8N8V4</id>
        <label>ANKS4B</label>
    </interactant>
    <organismsDiffer>false</organismsDiffer>
    <experiments>5</experiments>
</comment>
<comment type="interaction">
    <interactant intactId="EBI-11523636">
        <id>Q9Y6N9-4</id>
    </interactant>
    <interactant intactId="EBI-744099">
        <id>Q9H0I2</id>
        <label>ENKD1</label>
    </interactant>
    <organismsDiffer>false</organismsDiffer>
    <experiments>3</experiments>
</comment>
<comment type="interaction">
    <interactant intactId="EBI-11523636">
        <id>Q9Y6N9-4</id>
    </interactant>
    <interactant intactId="EBI-12012016">
        <id>Q9Y5F1</id>
        <label>PCDHB12</label>
    </interactant>
    <organismsDiffer>false</organismsDiffer>
    <experiments>3</experiments>
</comment>
<comment type="interaction">
    <interactant intactId="EBI-11523636">
        <id>Q9Y6N9-4</id>
    </interactant>
    <interactant intactId="EBI-1383852">
        <id>P54646</id>
        <label>PRKAA2</label>
    </interactant>
    <organismsDiffer>false</organismsDiffer>
    <experiments>3</experiments>
</comment>
<comment type="interaction">
    <interactant intactId="EBI-11523636">
        <id>Q9Y6N9-4</id>
    </interactant>
    <interactant intactId="EBI-11621644">
        <id>O75445-1</id>
        <label>USH2A</label>
    </interactant>
    <organismsDiffer>false</organismsDiffer>
    <experiments>3</experiments>
</comment>
<comment type="subcellular location">
    <subcellularLocation>
        <location evidence="14">Cytoplasm</location>
        <location evidence="14">Cytosol</location>
    </subcellularLocation>
    <subcellularLocation>
        <location evidence="13 15">Cytoplasm</location>
        <location evidence="13 15">Cytoskeleton</location>
    </subcellularLocation>
    <subcellularLocation>
        <location evidence="16 19">Cell projection</location>
        <location evidence="16 19">Microvillus</location>
    </subcellularLocation>
    <text evidence="1 16 19">Colocalizes with F-actin (By similarity). Detected at the tip of cochlear hair cell stereocilia (By similarity). Enriched in microvilli of the intestinal brush border (PubMed:24725409, PubMed:32209652).</text>
</comment>
<comment type="alternative products">
    <event type="alternative splicing"/>
    <isoform>
        <id>Q9Y6N9-1</id>
        <name>1</name>
        <sequence type="displayed"/>
    </isoform>
    <isoform>
        <id>Q9Y6N9-2</id>
        <name>2</name>
        <sequence type="described" ref="VSP_003789"/>
    </isoform>
    <isoform>
        <id>Q9Y6N9-3</id>
        <name>3</name>
        <sequence type="described" ref="VSP_003790"/>
    </isoform>
    <isoform>
        <id>Q9Y6N9-4</id>
        <name>4</name>
        <sequence type="described" ref="VSP_007422"/>
    </isoform>
    <isoform>
        <id>Q9Y6N9-5</id>
        <name>5</name>
        <sequence type="described" ref="VSP_043520 VSP_043521"/>
    </isoform>
</comment>
<comment type="tissue specificity">
    <text evidence="8">Expressed in small intestine, colon, kidney, eye and weakly in pancreas. Expressed also in vestibule of the inner ear.</text>
</comment>
<comment type="domain">
    <text evidence="11 12 14 16 17 18">The PDZ 1 domain mediates interaction with ANKS4B, DOCK4, USHBP1, USH1G, SLC4A7.</text>
</comment>
<comment type="domain">
    <text evidence="14">The N-terminal region constitutes an independently folded domain that has structural similarity with the CCM2 C-terminus, despite very low sequence similarity.</text>
</comment>
<comment type="disease" evidence="5">
    <disease id="DI-01113">
        <name>Usher syndrome 1C</name>
        <acronym>USH1C</acronym>
        <description>USH is a genetically heterogeneous condition characterized by the association of retinitis pigmentosa with sensorineural deafness. Age at onset and differences in auditory and vestibular function distinguish Usher syndrome type 1 (USH1), Usher syndrome type 2 (USH2) and Usher syndrome type 3 (USH3). USH1 is characterized by profound congenital sensorineural deafness, absent vestibular function and prepubertal onset of progressive retinitis pigmentosa leading to blindness.</description>
        <dbReference type="MIM" id="276904"/>
    </disease>
    <text>The disease is caused by variants affecting the gene represented in this entry.</text>
</comment>
<comment type="disease" evidence="7">
    <disease id="DI-00864">
        <name>Deafness, autosomal recessive, 18A</name>
        <acronym>DFNB18A</acronym>
        <description>A form of non-syndromic sensorineural hearing loss. Sensorineural deafness results from damage to the neural receptors of the inner ear, the nerve pathways to the brain, or the area of the brain that receives sound information.</description>
        <dbReference type="MIM" id="602092"/>
    </disease>
    <text>The disease is caused by variants affecting the gene represented in this entry.</text>
</comment>
<comment type="miscellaneous">
    <molecule>Isoform 3</molecule>
    <text evidence="24">May be produced at very low levels due to a premature stop codon in the mRNA, leading to nonsense-mediated mRNA decay.</text>
</comment>
<comment type="sequence caution" evidence="24">
    <conflict type="frameshift">
        <sequence resource="EMBL-CDS" id="AAC18049"/>
    </conflict>
</comment>
<name>USH1C_HUMAN</name>
<reference key="1">
    <citation type="journal article" date="1998" name="Int. J. Cancer">
        <title>Characterization of human colon cancer antigens recognized by autologous antibodies.</title>
        <authorList>
            <person name="Scanlan M.J."/>
            <person name="Chen Y.-T."/>
            <person name="Williamson B."/>
            <person name="Gure A.O."/>
            <person name="Stockert E."/>
            <person name="Gordan J.D."/>
            <person name="Tuereci O."/>
            <person name="Sahin U."/>
            <person name="Pfreundschuh M."/>
            <person name="Old L.J."/>
        </authorList>
    </citation>
    <scope>NUCLEOTIDE SEQUENCE [MRNA] (ISOFORMS 1 AND 3)</scope>
    <scope>VARIANT ASP-519</scope>
    <source>
        <tissue>Colon cancer</tissue>
    </source>
</reference>
<reference key="2">
    <citation type="journal article" date="1999" name="Gastroenterology">
        <title>Identification of an autoimmune enteropathy-related 75-kilodalton antigen.</title>
        <authorList>
            <person name="Kobayashi I."/>
            <person name="Imamura K."/>
            <person name="Kubota M."/>
            <person name="Ishikawa S."/>
            <person name="Yamada M."/>
            <person name="Tonoki H."/>
            <person name="Okano M."/>
            <person name="Storch W.B."/>
            <person name="Moriuchi T."/>
            <person name="Sakiyama Y."/>
            <person name="Kobayashi K."/>
        </authorList>
    </citation>
    <scope>NUCLEOTIDE SEQUENCE [MRNA] (ISOFORMS 1 AND 2)</scope>
    <source>
        <tissue>Duodenum</tissue>
    </source>
</reference>
<reference key="3">
    <citation type="journal article" date="2004" name="Nat. Genet.">
        <title>Complete sequencing and characterization of 21,243 full-length human cDNAs.</title>
        <authorList>
            <person name="Ota T."/>
            <person name="Suzuki Y."/>
            <person name="Nishikawa T."/>
            <person name="Otsuki T."/>
            <person name="Sugiyama T."/>
            <person name="Irie R."/>
            <person name="Wakamatsu A."/>
            <person name="Hayashi K."/>
            <person name="Sato H."/>
            <person name="Nagai K."/>
            <person name="Kimura K."/>
            <person name="Makita H."/>
            <person name="Sekine M."/>
            <person name="Obayashi M."/>
            <person name="Nishi T."/>
            <person name="Shibahara T."/>
            <person name="Tanaka T."/>
            <person name="Ishii S."/>
            <person name="Yamamoto J."/>
            <person name="Saito K."/>
            <person name="Kawai Y."/>
            <person name="Isono Y."/>
            <person name="Nakamura Y."/>
            <person name="Nagahari K."/>
            <person name="Murakami K."/>
            <person name="Yasuda T."/>
            <person name="Iwayanagi T."/>
            <person name="Wagatsuma M."/>
            <person name="Shiratori A."/>
            <person name="Sudo H."/>
            <person name="Hosoiri T."/>
            <person name="Kaku Y."/>
            <person name="Kodaira H."/>
            <person name="Kondo H."/>
            <person name="Sugawara M."/>
            <person name="Takahashi M."/>
            <person name="Kanda K."/>
            <person name="Yokoi T."/>
            <person name="Furuya T."/>
            <person name="Kikkawa E."/>
            <person name="Omura Y."/>
            <person name="Abe K."/>
            <person name="Kamihara K."/>
            <person name="Katsuta N."/>
            <person name="Sato K."/>
            <person name="Tanikawa M."/>
            <person name="Yamazaki M."/>
            <person name="Ninomiya K."/>
            <person name="Ishibashi T."/>
            <person name="Yamashita H."/>
            <person name="Murakawa K."/>
            <person name="Fujimori K."/>
            <person name="Tanai H."/>
            <person name="Kimata M."/>
            <person name="Watanabe M."/>
            <person name="Hiraoka S."/>
            <person name="Chiba Y."/>
            <person name="Ishida S."/>
            <person name="Ono Y."/>
            <person name="Takiguchi S."/>
            <person name="Watanabe S."/>
            <person name="Yosida M."/>
            <person name="Hotuta T."/>
            <person name="Kusano J."/>
            <person name="Kanehori K."/>
            <person name="Takahashi-Fujii A."/>
            <person name="Hara H."/>
            <person name="Tanase T.-O."/>
            <person name="Nomura Y."/>
            <person name="Togiya S."/>
            <person name="Komai F."/>
            <person name="Hara R."/>
            <person name="Takeuchi K."/>
            <person name="Arita M."/>
            <person name="Imose N."/>
            <person name="Musashino K."/>
            <person name="Yuuki H."/>
            <person name="Oshima A."/>
            <person name="Sasaki N."/>
            <person name="Aotsuka S."/>
            <person name="Yoshikawa Y."/>
            <person name="Matsunawa H."/>
            <person name="Ichihara T."/>
            <person name="Shiohata N."/>
            <person name="Sano S."/>
            <person name="Moriya S."/>
            <person name="Momiyama H."/>
            <person name="Satoh N."/>
            <person name="Takami S."/>
            <person name="Terashima Y."/>
            <person name="Suzuki O."/>
            <person name="Nakagawa S."/>
            <person name="Senoh A."/>
            <person name="Mizoguchi H."/>
            <person name="Goto Y."/>
            <person name="Shimizu F."/>
            <person name="Wakebe H."/>
            <person name="Hishigaki H."/>
            <person name="Watanabe T."/>
            <person name="Sugiyama A."/>
            <person name="Takemoto M."/>
            <person name="Kawakami B."/>
            <person name="Yamazaki M."/>
            <person name="Watanabe K."/>
            <person name="Kumagai A."/>
            <person name="Itakura S."/>
            <person name="Fukuzumi Y."/>
            <person name="Fujimori Y."/>
            <person name="Komiyama M."/>
            <person name="Tashiro H."/>
            <person name="Tanigami A."/>
            <person name="Fujiwara T."/>
            <person name="Ono T."/>
            <person name="Yamada K."/>
            <person name="Fujii Y."/>
            <person name="Ozaki K."/>
            <person name="Hirao M."/>
            <person name="Ohmori Y."/>
            <person name="Kawabata A."/>
            <person name="Hikiji T."/>
            <person name="Kobatake N."/>
            <person name="Inagaki H."/>
            <person name="Ikema Y."/>
            <person name="Okamoto S."/>
            <person name="Okitani R."/>
            <person name="Kawakami T."/>
            <person name="Noguchi S."/>
            <person name="Itoh T."/>
            <person name="Shigeta K."/>
            <person name="Senba T."/>
            <person name="Matsumura K."/>
            <person name="Nakajima Y."/>
            <person name="Mizuno T."/>
            <person name="Morinaga M."/>
            <person name="Sasaki M."/>
            <person name="Togashi T."/>
            <person name="Oyama M."/>
            <person name="Hata H."/>
            <person name="Watanabe M."/>
            <person name="Komatsu T."/>
            <person name="Mizushima-Sugano J."/>
            <person name="Satoh T."/>
            <person name="Shirai Y."/>
            <person name="Takahashi Y."/>
            <person name="Nakagawa K."/>
            <person name="Okumura K."/>
            <person name="Nagase T."/>
            <person name="Nomura N."/>
            <person name="Kikuchi H."/>
            <person name="Masuho Y."/>
            <person name="Yamashita R."/>
            <person name="Nakai K."/>
            <person name="Yada T."/>
            <person name="Nakamura Y."/>
            <person name="Ohara O."/>
            <person name="Isogai T."/>
            <person name="Sugano S."/>
        </authorList>
    </citation>
    <scope>NUCLEOTIDE SEQUENCE [LARGE SCALE MRNA] (ISOFORM 1)</scope>
    <scope>VARIANT ASP-519</scope>
    <source>
        <tissue>Kidney</tissue>
    </source>
</reference>
<reference key="4">
    <citation type="journal article" date="2006" name="Nature">
        <title>Human chromosome 11 DNA sequence and analysis including novel gene identification.</title>
        <authorList>
            <person name="Taylor T.D."/>
            <person name="Noguchi H."/>
            <person name="Totoki Y."/>
            <person name="Toyoda A."/>
            <person name="Kuroki Y."/>
            <person name="Dewar K."/>
            <person name="Lloyd C."/>
            <person name="Itoh T."/>
            <person name="Takeda T."/>
            <person name="Kim D.-W."/>
            <person name="She X."/>
            <person name="Barlow K.F."/>
            <person name="Bloom T."/>
            <person name="Bruford E."/>
            <person name="Chang J.L."/>
            <person name="Cuomo C.A."/>
            <person name="Eichler E."/>
            <person name="FitzGerald M.G."/>
            <person name="Jaffe D.B."/>
            <person name="LaButti K."/>
            <person name="Nicol R."/>
            <person name="Park H.-S."/>
            <person name="Seaman C."/>
            <person name="Sougnez C."/>
            <person name="Yang X."/>
            <person name="Zimmer A.R."/>
            <person name="Zody M.C."/>
            <person name="Birren B.W."/>
            <person name="Nusbaum C."/>
            <person name="Fujiyama A."/>
            <person name="Hattori M."/>
            <person name="Rogers J."/>
            <person name="Lander E.S."/>
            <person name="Sakaki Y."/>
        </authorList>
    </citation>
    <scope>NUCLEOTIDE SEQUENCE [LARGE SCALE GENOMIC DNA]</scope>
</reference>
<reference key="5">
    <citation type="submission" date="2005-09" db="EMBL/GenBank/DDBJ databases">
        <authorList>
            <person name="Mural R.J."/>
            <person name="Istrail S."/>
            <person name="Sutton G."/>
            <person name="Florea L."/>
            <person name="Halpern A.L."/>
            <person name="Mobarry C.M."/>
            <person name="Lippert R."/>
            <person name="Walenz B."/>
            <person name="Shatkay H."/>
            <person name="Dew I."/>
            <person name="Miller J.R."/>
            <person name="Flanigan M.J."/>
            <person name="Edwards N.J."/>
            <person name="Bolanos R."/>
            <person name="Fasulo D."/>
            <person name="Halldorsson B.V."/>
            <person name="Hannenhalli S."/>
            <person name="Turner R."/>
            <person name="Yooseph S."/>
            <person name="Lu F."/>
            <person name="Nusskern D.R."/>
            <person name="Shue B.C."/>
            <person name="Zheng X.H."/>
            <person name="Zhong F."/>
            <person name="Delcher A.L."/>
            <person name="Huson D.H."/>
            <person name="Kravitz S.A."/>
            <person name="Mouchard L."/>
            <person name="Reinert K."/>
            <person name="Remington K.A."/>
            <person name="Clark A.G."/>
            <person name="Waterman M.S."/>
            <person name="Eichler E.E."/>
            <person name="Adams M.D."/>
            <person name="Hunkapiller M.W."/>
            <person name="Myers E.W."/>
            <person name="Venter J.C."/>
        </authorList>
    </citation>
    <scope>NUCLEOTIDE SEQUENCE [LARGE SCALE GENOMIC DNA]</scope>
</reference>
<reference key="6">
    <citation type="journal article" date="2004" name="Genome Res.">
        <title>The status, quality, and expansion of the NIH full-length cDNA project: the Mammalian Gene Collection (MGC).</title>
        <authorList>
            <consortium name="The MGC Project Team"/>
        </authorList>
    </citation>
    <scope>NUCLEOTIDE SEQUENCE [LARGE SCALE MRNA] (ISOFORM 4)</scope>
    <scope>VARIANT ASP-519</scope>
    <source>
        <tissue>Colon</tissue>
    </source>
</reference>
<reference key="7">
    <citation type="journal article" date="1999" name="Int. J. Cancer">
        <title>Antigens recognized by autologous antibody in patients with renal-cell carcinoma.</title>
        <authorList>
            <person name="Scanlan M.J."/>
            <person name="Gordan J.D."/>
            <person name="Williamson B."/>
            <person name="Stockert E."/>
            <person name="Bander N.H."/>
            <person name="Jongeneel C.V."/>
            <person name="Gure A.O."/>
            <person name="Jaeger D."/>
            <person name="Jaeger E."/>
            <person name="Knuth A."/>
            <person name="Chen Y.-T."/>
            <person name="Old L.J."/>
        </authorList>
    </citation>
    <scope>IDENTIFICATION AS A RENAL CANCER ANTIGEN</scope>
    <source>
        <tissue>Renal cell carcinoma</tissue>
    </source>
</reference>
<reference key="8">
    <citation type="journal article" date="2000" name="Nat. Genet.">
        <title>A defect in harmonin, a PDZ domain-containing protein expressed in the inner ear sensory hair cells, underlies Usher syndrome type 1C.</title>
        <authorList>
            <person name="Verpy E."/>
            <person name="Leibovici M."/>
            <person name="Zwaenepoel I."/>
            <person name="Liu X.-Z."/>
            <person name="Gal A."/>
            <person name="Salem N."/>
            <person name="Mansour A."/>
            <person name="Blanchard S."/>
            <person name="Kobayashi I."/>
            <person name="Keats B.J.B."/>
            <person name="Slim R."/>
            <person name="Petit C."/>
        </authorList>
    </citation>
    <scope>INVOLVEMENT IN USH1C</scope>
    <scope>ALTERNATIVE SPLICING (ISOFORM 5)</scope>
</reference>
<reference key="9">
    <citation type="journal article" date="2001" name="Gene">
        <title>Interaction of MCC2, a novel homologue of MCC tumor suppressor, with PDZ-domain protein AIE-75.</title>
        <authorList>
            <person name="Ishikawa S."/>
            <person name="Kobayashi I."/>
            <person name="Hamada J."/>
            <person name="Tada M."/>
            <person name="Hirai A."/>
            <person name="Furuuchi K."/>
            <person name="Takahashi Y."/>
            <person name="Ba Y."/>
            <person name="Moriuchi T."/>
        </authorList>
    </citation>
    <scope>INTERACTION WITH USHBP1</scope>
    <scope>DOMAIN</scope>
</reference>
<reference key="10">
    <citation type="journal article" date="2002" name="Hum. Genet.">
        <title>Nonsyndromic recessive deafness DFNB18 and Usher syndrome type IC are allelic mutations of USHIC.</title>
        <authorList>
            <person name="Ahmed Z.M."/>
            <person name="Smith T.N."/>
            <person name="Riazuddin S."/>
            <person name="Makishima T."/>
            <person name="Ghosh M."/>
            <person name="Bokhari S."/>
            <person name="Menon P.S."/>
            <person name="Deshmukh D."/>
            <person name="Griffith A.J."/>
            <person name="Riazuddin S."/>
            <person name="Friedman T.B."/>
            <person name="Wilcox E.R."/>
        </authorList>
    </citation>
    <scope>INVOLVEMENT IN DFNB18A</scope>
</reference>
<reference key="11">
    <citation type="journal article" date="2003" name="Hum. Mol. Genet.">
        <title>Usher syndrome type I G (USH1G) is caused by mutations in the gene encoding SANS, a protein that associates with the USH1C protein, harmonin.</title>
        <authorList>
            <person name="Weil D."/>
            <person name="El-Amraoui A."/>
            <person name="Masmoudi S."/>
            <person name="Mustapha M."/>
            <person name="Kikkawa Y."/>
            <person name="Laine S."/>
            <person name="Delmaghani S."/>
            <person name="Adato A."/>
            <person name="Nadifi S."/>
            <person name="Zina Z.B."/>
            <person name="Hamel C."/>
            <person name="Gal A."/>
            <person name="Ayadi H."/>
            <person name="Yonekawa H."/>
            <person name="Petit C."/>
        </authorList>
    </citation>
    <scope>INTERACTION WITH USH1G</scope>
    <scope>TISSUE SPECIFICITY</scope>
</reference>
<reference key="12">
    <citation type="journal article" date="2004" name="Genome Biol.">
        <title>An unappreciated role for RNA surveillance.</title>
        <authorList>
            <person name="Hillman R.T."/>
            <person name="Green R.E."/>
            <person name="Brenner S.E."/>
        </authorList>
    </citation>
    <scope>SPLICE ISOFORM(S) THAT ARE POTENTIAL NMD TARGET(S)</scope>
</reference>
<reference key="13">
    <citation type="journal article" date="2005" name="Hum. Mol. Genet.">
        <title>Scaffold protein harmonin (USH1C) provides molecular links between Usher syndrome type 1 and type 2.</title>
        <authorList>
            <person name="Reiners J."/>
            <person name="van Wijk E."/>
            <person name="Maerker T."/>
            <person name="Zimmermann U."/>
            <person name="Juergens K."/>
            <person name="te Brinke H."/>
            <person name="Overlack N."/>
            <person name="Roepman R."/>
            <person name="Knipper M."/>
            <person name="Kremer H."/>
            <person name="Wolfrum U."/>
        </authorList>
    </citation>
    <scope>INTERACTION WITH SLC4A7 AND USH2A</scope>
    <scope>DOMAIN</scope>
</reference>
<reference key="14">
    <citation type="journal article" date="2006" name="J. Mol. Biol.">
        <title>An isoform of GTPase regulator DOCK4 localizes to the stereocilia in the inner ear and binds to harmonin (USH1C).</title>
        <authorList>
            <person name="Yan D."/>
            <person name="Li F."/>
            <person name="Hall M.L."/>
            <person name="Sage C."/>
            <person name="Hu W.H."/>
            <person name="Giallourakis C."/>
            <person name="Upadhyay G."/>
            <person name="Ouyang X.M."/>
            <person name="Du L.L."/>
            <person name="Bethea J.R."/>
            <person name="Chen Z.Y."/>
            <person name="Yajnik V."/>
            <person name="Liu X.Z."/>
        </authorList>
    </citation>
    <scope>INTERACTION WITH DOCK4</scope>
    <scope>DOMAIN</scope>
</reference>
<reference key="15">
    <citation type="journal article" date="2011" name="Proc. Natl. Acad. Sci. U.S.A.">
        <title>Myosin VIIa and sans localization at stereocilia upper tip-link density implicates these Usher syndrome proteins in mechanotransduction.</title>
        <authorList>
            <person name="Grati M."/>
            <person name="Kachar B."/>
        </authorList>
    </citation>
    <scope>SUBCELLULAR LOCATION</scope>
    <scope>IDENTIFICATION IN A COMPLEX WITH MYO7A AND USH1G</scope>
</reference>
<reference key="16">
    <citation type="journal article" date="2014" name="Cell">
        <title>Intestinal brush border assembly driven by protocadherin-based intermicrovillar adhesion.</title>
        <authorList>
            <person name="Crawley S.W."/>
            <person name="Shifrin D.A. Jr."/>
            <person name="Grega-Larson N.E."/>
            <person name="McConnell R.E."/>
            <person name="Benesh A.E."/>
            <person name="Mao S."/>
            <person name="Zheng Y."/>
            <person name="Zheng Q.Y."/>
            <person name="Nam K.T."/>
            <person name="Millis B.A."/>
            <person name="Kachar B."/>
            <person name="Tyska M.J."/>
        </authorList>
    </citation>
    <scope>FUNCTION</scope>
    <scope>SUBCELLULAR LOCATION</scope>
    <scope>IDENTIFICATION OF THE IMAC COMPLEX</scope>
    <scope>INTERACTION WITH CDHR2; CDHR5 AND MYO7B</scope>
    <scope>DOMAIN</scope>
</reference>
<reference key="17">
    <citation type="journal article" date="2016" name="Dev. Cell">
        <title>ANKS4B is essential for intermicrovillar adhesion complex formation.</title>
        <authorList>
            <person name="Crawley S.W."/>
            <person name="Weck M.L."/>
            <person name="Grega-Larson N.E."/>
            <person name="Shifrin D.A. Jr."/>
            <person name="Tyska M.J."/>
        </authorList>
    </citation>
    <scope>FUNCTION</scope>
    <scope>IDENTIFICATION OF THE IMAC COMPLEX</scope>
    <scope>INTERACTION WITH ANKS4B AND MYO7B</scope>
    <scope>DOMAIN</scope>
    <scope>REGION</scope>
</reference>
<reference key="18">
    <citation type="journal article" date="2020" name="J. Biol. Chem.">
        <title>The small EF-hand protein CALML4 functions as a critical myosin light chain within the intermicrovillar adhesion complex.</title>
        <authorList>
            <person name="Choi M.S."/>
            <person name="Graves M.J."/>
            <person name="Matoo S."/>
            <person name="Storad Z.A."/>
            <person name="El Sheikh Idris R.A."/>
            <person name="Weck M.L."/>
            <person name="Smith Z.B."/>
            <person name="Tyska M.J."/>
            <person name="Crawley S.W."/>
        </authorList>
    </citation>
    <scope>IDENTIFICATION OF THE IMAC COMPLEX</scope>
    <scope>SUBCELLULAR LOCATION</scope>
</reference>
<reference key="19">
    <citation type="submission" date="2005-11" db="PDB data bank">
        <title>Solution structure of the second PDZ domain of harmonin protein.</title>
        <authorList>
            <consortium name="RIKEN structural genomics initiative (RSGI)"/>
        </authorList>
    </citation>
    <scope>STRUCTURE BY NMR OF 197-301</scope>
</reference>
<reference key="20">
    <citation type="journal article" date="2009" name="Proc. Natl. Acad. Sci. U.S.A.">
        <title>Assembling stable hair cell tip link complex via multidentate interactions between harmonin and cadherin 23.</title>
        <authorList>
            <person name="Pan L."/>
            <person name="Yan J."/>
            <person name="Wu L."/>
            <person name="Zhang M."/>
        </authorList>
    </citation>
    <scope>STRUCTURE BY NMR OF 1-80 AND 208-299 IN COMPLEX WITH CDH23</scope>
    <scope>SUBCELLULAR LOCATION</scope>
    <scope>INTERACTION WITH CDH23</scope>
</reference>
<reference key="21">
    <citation type="journal article" date="2010" name="Proc. Natl. Acad. Sci. U.S.A.">
        <title>The structure of the harmonin/sans complex reveals an unexpected interaction mode of the two Usher syndrome proteins.</title>
        <authorList>
            <person name="Yan J."/>
            <person name="Pan L."/>
            <person name="Chen X."/>
            <person name="Wu L."/>
            <person name="Zhang M."/>
        </authorList>
    </citation>
    <scope>X-RAY CRYSTALLOGRAPHY (2.3 ANGSTROMS) OF 1-192 IN COMPLEX WITH USH1G</scope>
    <scope>INTERACTION WITH USH1G</scope>
    <scope>MUTAGENESIS OF ARG-103</scope>
    <scope>DOMAIN</scope>
    <scope>SUBCELLULAR LOCATION</scope>
</reference>
<reference key="22">
    <citation type="journal article" date="2016" name="Dev. Cell">
        <title>Mechanistic basis of organization of the Harmonin/USH1C-mediated brush border microvilli tip-link complex.</title>
        <authorList>
            <person name="Li J."/>
            <person name="He Y."/>
            <person name="Lu Q."/>
            <person name="Zhang M."/>
        </authorList>
    </citation>
    <scope>X-RAY CRYSTALLOGRAPHY (2.65 ANGSTROMS) OF 1-194 IN COMPLEX WITH ANKS4B</scope>
    <scope>INTERACTION WITH CDHR2 AND MYO7B</scope>
    <scope>REGION</scope>
    <scope>DOMAIN</scope>
</reference>
<dbReference type="EMBL" id="AF039700">
    <property type="protein sequence ID" value="AAC18049.1"/>
    <property type="status" value="ALT_FRAME"/>
    <property type="molecule type" value="mRNA"/>
</dbReference>
<dbReference type="EMBL" id="AF039699">
    <property type="protein sequence ID" value="AAC18048.1"/>
    <property type="molecule type" value="mRNA"/>
</dbReference>
<dbReference type="EMBL" id="AB006955">
    <property type="protein sequence ID" value="BAA81739.1"/>
    <property type="molecule type" value="mRNA"/>
</dbReference>
<dbReference type="EMBL" id="AB018687">
    <property type="protein sequence ID" value="BAA81740.1"/>
    <property type="molecule type" value="mRNA"/>
</dbReference>
<dbReference type="EMBL" id="AK290788">
    <property type="protein sequence ID" value="BAF83477.1"/>
    <property type="molecule type" value="mRNA"/>
</dbReference>
<dbReference type="EMBL" id="AC124799">
    <property type="status" value="NOT_ANNOTATED_CDS"/>
    <property type="molecule type" value="Genomic_DNA"/>
</dbReference>
<dbReference type="EMBL" id="BC016057">
    <property type="protein sequence ID" value="AAH16057.1"/>
    <property type="molecule type" value="mRNA"/>
</dbReference>
<dbReference type="EMBL" id="CH471064">
    <property type="protein sequence ID" value="EAW68432.1"/>
    <property type="molecule type" value="Genomic_DNA"/>
</dbReference>
<dbReference type="EMBL" id="BK000147">
    <property type="protein sequence ID" value="DAA00086.1"/>
    <property type="molecule type" value="mRNA"/>
</dbReference>
<dbReference type="CCDS" id="CCDS31438.1">
    <molecule id="Q9Y6N9-1"/>
</dbReference>
<dbReference type="CCDS" id="CCDS73265.1">
    <molecule id="Q9Y6N9-4"/>
</dbReference>
<dbReference type="CCDS" id="CCDS7825.1">
    <molecule id="Q9Y6N9-5"/>
</dbReference>
<dbReference type="RefSeq" id="NP_001284693.1">
    <molecule id="Q9Y6N9-4"/>
    <property type="nucleotide sequence ID" value="NM_001297764.2"/>
</dbReference>
<dbReference type="RefSeq" id="NP_005700.2">
    <molecule id="Q9Y6N9-1"/>
    <property type="nucleotide sequence ID" value="NM_005709.4"/>
</dbReference>
<dbReference type="RefSeq" id="NP_710142.1">
    <molecule id="Q9Y6N9-5"/>
    <property type="nucleotide sequence ID" value="NM_153676.4"/>
</dbReference>
<dbReference type="PDB" id="1X5N">
    <property type="method" value="NMR"/>
    <property type="chains" value="A=201-301"/>
</dbReference>
<dbReference type="PDB" id="2KBQ">
    <property type="method" value="NMR"/>
    <property type="chains" value="A=1-80"/>
</dbReference>
<dbReference type="PDB" id="2KBR">
    <property type="method" value="NMR"/>
    <property type="chains" value="A=1-80"/>
</dbReference>
<dbReference type="PDB" id="2KBS">
    <property type="method" value="NMR"/>
    <property type="chains" value="A=208-299"/>
</dbReference>
<dbReference type="PDB" id="2LSR">
    <property type="method" value="NMR"/>
    <property type="chains" value="A=1-80"/>
</dbReference>
<dbReference type="PDB" id="3K1R">
    <property type="method" value="X-ray"/>
    <property type="resolution" value="2.30 A"/>
    <property type="chains" value="A=1-192"/>
</dbReference>
<dbReference type="PDB" id="5F3X">
    <property type="method" value="X-ray"/>
    <property type="resolution" value="2.65 A"/>
    <property type="chains" value="A/C=1-194"/>
</dbReference>
<dbReference type="PDB" id="5MV8">
    <property type="method" value="X-ray"/>
    <property type="resolution" value="1.88 A"/>
    <property type="chains" value="B=428-552"/>
</dbReference>
<dbReference type="PDB" id="5MV9">
    <property type="method" value="X-ray"/>
    <property type="resolution" value="2.60 A"/>
    <property type="chains" value="B=428-552"/>
</dbReference>
<dbReference type="PDB" id="5XBF">
    <property type="method" value="X-ray"/>
    <property type="resolution" value="1.80 A"/>
    <property type="chains" value="B=428-552"/>
</dbReference>
<dbReference type="PDB" id="7X2E">
    <property type="method" value="X-ray"/>
    <property type="resolution" value="1.85 A"/>
    <property type="chains" value="A=193-370"/>
</dbReference>
<dbReference type="PDBsum" id="1X5N"/>
<dbReference type="PDBsum" id="2KBQ"/>
<dbReference type="PDBsum" id="2KBR"/>
<dbReference type="PDBsum" id="2KBS"/>
<dbReference type="PDBsum" id="2LSR"/>
<dbReference type="PDBsum" id="3K1R"/>
<dbReference type="PDBsum" id="5F3X"/>
<dbReference type="PDBsum" id="5MV8"/>
<dbReference type="PDBsum" id="5MV9"/>
<dbReference type="PDBsum" id="5XBF"/>
<dbReference type="PDBsum" id="7X2E"/>
<dbReference type="BMRB" id="Q9Y6N9"/>
<dbReference type="SMR" id="Q9Y6N9"/>
<dbReference type="BioGRID" id="115392">
    <property type="interactions" value="32"/>
</dbReference>
<dbReference type="CORUM" id="Q9Y6N9"/>
<dbReference type="DIP" id="DIP-41473N"/>
<dbReference type="ELM" id="Q9Y6N9"/>
<dbReference type="FunCoup" id="Q9Y6N9">
    <property type="interactions" value="13"/>
</dbReference>
<dbReference type="IntAct" id="Q9Y6N9">
    <property type="interactions" value="31"/>
</dbReference>
<dbReference type="MINT" id="Q9Y6N9"/>
<dbReference type="iPTMnet" id="Q9Y6N9"/>
<dbReference type="PhosphoSitePlus" id="Q9Y6N9"/>
<dbReference type="BioMuta" id="USH1C"/>
<dbReference type="DMDM" id="160113087"/>
<dbReference type="jPOST" id="Q9Y6N9"/>
<dbReference type="MassIVE" id="Q9Y6N9"/>
<dbReference type="PeptideAtlas" id="Q9Y6N9"/>
<dbReference type="ProteomicsDB" id="86750">
    <molecule id="Q9Y6N9-1"/>
</dbReference>
<dbReference type="ProteomicsDB" id="86751">
    <molecule id="Q9Y6N9-2"/>
</dbReference>
<dbReference type="ProteomicsDB" id="86752">
    <molecule id="Q9Y6N9-3"/>
</dbReference>
<dbReference type="ProteomicsDB" id="86753">
    <molecule id="Q9Y6N9-4"/>
</dbReference>
<dbReference type="ProteomicsDB" id="86754">
    <molecule id="Q9Y6N9-5"/>
</dbReference>
<dbReference type="Antibodypedia" id="24888">
    <property type="antibodies" value="269 antibodies from 32 providers"/>
</dbReference>
<dbReference type="DNASU" id="10083"/>
<dbReference type="Ensembl" id="ENST00000005226.12">
    <molecule id="Q9Y6N9-5"/>
    <property type="protein sequence ID" value="ENSP00000005226.7"/>
    <property type="gene ID" value="ENSG00000006611.17"/>
</dbReference>
<dbReference type="Ensembl" id="ENST00000318024.9">
    <molecule id="Q9Y6N9-1"/>
    <property type="protein sequence ID" value="ENSP00000317018.4"/>
    <property type="gene ID" value="ENSG00000006611.17"/>
</dbReference>
<dbReference type="Ensembl" id="ENST00000526313.5">
    <molecule id="Q9Y6N9-3"/>
    <property type="protein sequence ID" value="ENSP00000432236.1"/>
    <property type="gene ID" value="ENSG00000006611.17"/>
</dbReference>
<dbReference type="Ensembl" id="ENST00000527020.5">
    <molecule id="Q9Y6N9-4"/>
    <property type="protein sequence ID" value="ENSP00000436934.1"/>
    <property type="gene ID" value="ENSG00000006611.17"/>
</dbReference>
<dbReference type="Ensembl" id="ENST00000527720.5">
    <molecule id="Q9Y6N9-2"/>
    <property type="protein sequence ID" value="ENSP00000432944.1"/>
    <property type="gene ID" value="ENSG00000006611.17"/>
</dbReference>
<dbReference type="GeneID" id="10083"/>
<dbReference type="KEGG" id="hsa:10083"/>
<dbReference type="MANE-Select" id="ENST00000005226.12">
    <molecule id="Q9Y6N9-5"/>
    <property type="protein sequence ID" value="ENSP00000005226.7"/>
    <property type="RefSeq nucleotide sequence ID" value="NM_153676.4"/>
    <property type="RefSeq protein sequence ID" value="NP_710142.1"/>
</dbReference>
<dbReference type="UCSC" id="uc001mne.4">
    <molecule id="Q9Y6N9-1"/>
    <property type="organism name" value="human"/>
</dbReference>
<dbReference type="AGR" id="HGNC:12597"/>
<dbReference type="CTD" id="10083"/>
<dbReference type="DisGeNET" id="10083"/>
<dbReference type="GeneCards" id="USH1C"/>
<dbReference type="GeneReviews" id="USH1C"/>
<dbReference type="HGNC" id="HGNC:12597">
    <property type="gene designation" value="USH1C"/>
</dbReference>
<dbReference type="HPA" id="ENSG00000006611">
    <property type="expression patterns" value="Tissue enhanced (intestine, kidney)"/>
</dbReference>
<dbReference type="MalaCards" id="USH1C"/>
<dbReference type="MIM" id="276900">
    <property type="type" value="phenotype"/>
</dbReference>
<dbReference type="MIM" id="276904">
    <property type="type" value="phenotype"/>
</dbReference>
<dbReference type="MIM" id="602092">
    <property type="type" value="phenotype"/>
</dbReference>
<dbReference type="MIM" id="605242">
    <property type="type" value="gene"/>
</dbReference>
<dbReference type="neXtProt" id="NX_Q9Y6N9"/>
<dbReference type="OpenTargets" id="ENSG00000006611"/>
<dbReference type="Orphanet" id="90636">
    <property type="disease" value="Rare autosomal recessive non-syndromic sensorineural deafness type DFNB"/>
</dbReference>
<dbReference type="Orphanet" id="231169">
    <property type="disease" value="Usher syndrome type 1"/>
</dbReference>
<dbReference type="PharmGKB" id="PA37226"/>
<dbReference type="VEuPathDB" id="HostDB:ENSG00000006611"/>
<dbReference type="eggNOG" id="KOG3528">
    <property type="taxonomic scope" value="Eukaryota"/>
</dbReference>
<dbReference type="GeneTree" id="ENSGT00950000183002"/>
<dbReference type="HOGENOM" id="CLU_019813_0_0_1"/>
<dbReference type="InParanoid" id="Q9Y6N9"/>
<dbReference type="OMA" id="WVQHTPP"/>
<dbReference type="OrthoDB" id="7734647at2759"/>
<dbReference type="PAN-GO" id="Q9Y6N9">
    <property type="GO annotations" value="10 GO annotations based on evolutionary models"/>
</dbReference>
<dbReference type="PhylomeDB" id="Q9Y6N9"/>
<dbReference type="TreeFam" id="TF325033"/>
<dbReference type="PathwayCommons" id="Q9Y6N9"/>
<dbReference type="Reactome" id="R-HSA-9662360">
    <property type="pathway name" value="Sensory processing of sound by inner hair cells of the cochlea"/>
</dbReference>
<dbReference type="Reactome" id="R-HSA-9662361">
    <property type="pathway name" value="Sensory processing of sound by outer hair cells of the cochlea"/>
</dbReference>
<dbReference type="SignaLink" id="Q9Y6N9"/>
<dbReference type="SIGNOR" id="Q9Y6N9"/>
<dbReference type="BioGRID-ORCS" id="10083">
    <property type="hits" value="4 hits in 1150 CRISPR screens"/>
</dbReference>
<dbReference type="CD-CODE" id="F345034F">
    <property type="entry name" value="Signaling cluster"/>
</dbReference>
<dbReference type="ChiTaRS" id="USH1C">
    <property type="organism name" value="human"/>
</dbReference>
<dbReference type="EvolutionaryTrace" id="Q9Y6N9"/>
<dbReference type="GeneWiki" id="USH1C"/>
<dbReference type="GenomeRNAi" id="10083"/>
<dbReference type="Pharos" id="Q9Y6N9">
    <property type="development level" value="Tbio"/>
</dbReference>
<dbReference type="PRO" id="PR:Q9Y6N9"/>
<dbReference type="Proteomes" id="UP000005640">
    <property type="component" value="Chromosome 11"/>
</dbReference>
<dbReference type="RNAct" id="Q9Y6N9">
    <property type="molecule type" value="protein"/>
</dbReference>
<dbReference type="Bgee" id="ENSG00000006611">
    <property type="expression patterns" value="Expressed in mucosa of transverse colon and 149 other cell types or tissues"/>
</dbReference>
<dbReference type="ExpressionAtlas" id="Q9Y6N9">
    <property type="expression patterns" value="baseline and differential"/>
</dbReference>
<dbReference type="GO" id="GO:0045177">
    <property type="term" value="C:apical part of cell"/>
    <property type="evidence" value="ECO:0000314"/>
    <property type="project" value="HGNC-UCL"/>
</dbReference>
<dbReference type="GO" id="GO:0005903">
    <property type="term" value="C:brush border"/>
    <property type="evidence" value="ECO:0000314"/>
    <property type="project" value="UniProtKB"/>
</dbReference>
<dbReference type="GO" id="GO:0005929">
    <property type="term" value="C:cilium"/>
    <property type="evidence" value="ECO:0000318"/>
    <property type="project" value="GO_Central"/>
</dbReference>
<dbReference type="GO" id="GO:0005737">
    <property type="term" value="C:cytoplasm"/>
    <property type="evidence" value="ECO:0000314"/>
    <property type="project" value="HGNC-UCL"/>
</dbReference>
<dbReference type="GO" id="GO:0005856">
    <property type="term" value="C:cytoskeleton"/>
    <property type="evidence" value="ECO:0007669"/>
    <property type="project" value="UniProtKB-SubCell"/>
</dbReference>
<dbReference type="GO" id="GO:0005829">
    <property type="term" value="C:cytosol"/>
    <property type="evidence" value="ECO:0000314"/>
    <property type="project" value="HPA"/>
</dbReference>
<dbReference type="GO" id="GO:0005902">
    <property type="term" value="C:microvillus"/>
    <property type="evidence" value="ECO:0000314"/>
    <property type="project" value="UniProtKB"/>
</dbReference>
<dbReference type="GO" id="GO:0001917">
    <property type="term" value="C:photoreceptor inner segment"/>
    <property type="evidence" value="ECO:0000250"/>
    <property type="project" value="BHF-UCL"/>
</dbReference>
<dbReference type="GO" id="GO:0001750">
    <property type="term" value="C:photoreceptor outer segment"/>
    <property type="evidence" value="ECO:0000250"/>
    <property type="project" value="BHF-UCL"/>
</dbReference>
<dbReference type="GO" id="GO:0005886">
    <property type="term" value="C:plasma membrane"/>
    <property type="evidence" value="ECO:0000250"/>
    <property type="project" value="BHF-UCL"/>
</dbReference>
<dbReference type="GO" id="GO:0002142">
    <property type="term" value="C:stereocilia ankle link complex"/>
    <property type="evidence" value="ECO:0000318"/>
    <property type="project" value="GO_Central"/>
</dbReference>
<dbReference type="GO" id="GO:0032420">
    <property type="term" value="C:stereocilium"/>
    <property type="evidence" value="ECO:0000250"/>
    <property type="project" value="BHF-UCL"/>
</dbReference>
<dbReference type="GO" id="GO:0032426">
    <property type="term" value="C:stereocilium tip"/>
    <property type="evidence" value="ECO:0000318"/>
    <property type="project" value="GO_Central"/>
</dbReference>
<dbReference type="GO" id="GO:0045202">
    <property type="term" value="C:synapse"/>
    <property type="evidence" value="ECO:0000250"/>
    <property type="project" value="BHF-UCL"/>
</dbReference>
<dbReference type="GO" id="GO:0030507">
    <property type="term" value="F:spectrin binding"/>
    <property type="evidence" value="ECO:0000314"/>
    <property type="project" value="MGI"/>
</dbReference>
<dbReference type="GO" id="GO:0051017">
    <property type="term" value="P:actin filament bundle assembly"/>
    <property type="evidence" value="ECO:0000250"/>
    <property type="project" value="BHF-UCL"/>
</dbReference>
<dbReference type="GO" id="GO:0002093">
    <property type="term" value="P:auditory receptor cell morphogenesis"/>
    <property type="evidence" value="ECO:0000318"/>
    <property type="project" value="GO_Central"/>
</dbReference>
<dbReference type="GO" id="GO:1904970">
    <property type="term" value="P:brush border assembly"/>
    <property type="evidence" value="ECO:0000314"/>
    <property type="project" value="UniProtKB"/>
</dbReference>
<dbReference type="GO" id="GO:0050957">
    <property type="term" value="P:equilibrioception"/>
    <property type="evidence" value="ECO:0000315"/>
    <property type="project" value="HGNC-UCL"/>
</dbReference>
<dbReference type="GO" id="GO:0000086">
    <property type="term" value="P:G2/M transition of mitotic cell cycle"/>
    <property type="evidence" value="ECO:0000315"/>
    <property type="project" value="HGNC-UCL"/>
</dbReference>
<dbReference type="GO" id="GO:0042491">
    <property type="term" value="P:inner ear auditory receptor cell differentiation"/>
    <property type="evidence" value="ECO:0000250"/>
    <property type="project" value="BHF-UCL"/>
</dbReference>
<dbReference type="GO" id="GO:0042472">
    <property type="term" value="P:inner ear morphogenesis"/>
    <property type="evidence" value="ECO:0000250"/>
    <property type="project" value="BHF-UCL"/>
</dbReference>
<dbReference type="GO" id="GO:0060122">
    <property type="term" value="P:inner ear receptor cell stereocilium organization"/>
    <property type="evidence" value="ECO:0000250"/>
    <property type="project" value="BHF-UCL"/>
</dbReference>
<dbReference type="GO" id="GO:0030046">
    <property type="term" value="P:parallel actin filament bundle assembly"/>
    <property type="evidence" value="ECO:0000250"/>
    <property type="project" value="BHF-UCL"/>
</dbReference>
<dbReference type="GO" id="GO:0045494">
    <property type="term" value="P:photoreceptor cell maintenance"/>
    <property type="evidence" value="ECO:0000315"/>
    <property type="project" value="HGNC-UCL"/>
</dbReference>
<dbReference type="GO" id="GO:1904106">
    <property type="term" value="P:protein localization to microvillus"/>
    <property type="evidence" value="ECO:0000315"/>
    <property type="project" value="UniProtKB"/>
</dbReference>
<dbReference type="GO" id="GO:0065003">
    <property type="term" value="P:protein-containing complex assembly"/>
    <property type="evidence" value="ECO:0000314"/>
    <property type="project" value="UniProtKB"/>
</dbReference>
<dbReference type="GO" id="GO:0032532">
    <property type="term" value="P:regulation of microvillus length"/>
    <property type="evidence" value="ECO:0000250"/>
    <property type="project" value="UniProtKB"/>
</dbReference>
<dbReference type="GO" id="GO:0046549">
    <property type="term" value="P:retinal cone cell development"/>
    <property type="evidence" value="ECO:0000318"/>
    <property type="project" value="GO_Central"/>
</dbReference>
<dbReference type="GO" id="GO:0050953">
    <property type="term" value="P:sensory perception of light stimulus"/>
    <property type="evidence" value="ECO:0000315"/>
    <property type="project" value="HGNC-UCL"/>
</dbReference>
<dbReference type="GO" id="GO:0007605">
    <property type="term" value="P:sensory perception of sound"/>
    <property type="evidence" value="ECO:0000315"/>
    <property type="project" value="HGNC-UCL"/>
</dbReference>
<dbReference type="CDD" id="cd07353">
    <property type="entry name" value="harmonin_N"/>
    <property type="match status" value="1"/>
</dbReference>
<dbReference type="CDD" id="cd06737">
    <property type="entry name" value="PDZ1_harmonin"/>
    <property type="match status" value="1"/>
</dbReference>
<dbReference type="CDD" id="cd06738">
    <property type="entry name" value="PDZ2_harmonin"/>
    <property type="match status" value="1"/>
</dbReference>
<dbReference type="CDD" id="cd06739">
    <property type="entry name" value="PDZ3_harmonin"/>
    <property type="match status" value="1"/>
</dbReference>
<dbReference type="FunFam" id="1.20.1160.20:FF:000001">
    <property type="entry name" value="harmonin isoform X1"/>
    <property type="match status" value="1"/>
</dbReference>
<dbReference type="FunFam" id="2.30.42.10:FF:000062">
    <property type="entry name" value="harmonin isoform X1"/>
    <property type="match status" value="1"/>
</dbReference>
<dbReference type="FunFam" id="2.30.42.10:FF:000071">
    <property type="entry name" value="harmonin isoform X1"/>
    <property type="match status" value="1"/>
</dbReference>
<dbReference type="FunFam" id="2.30.42.10:FF:000104">
    <property type="entry name" value="harmonin isoform X2"/>
    <property type="match status" value="1"/>
</dbReference>
<dbReference type="Gene3D" id="1.20.1160.20">
    <property type="match status" value="1"/>
</dbReference>
<dbReference type="Gene3D" id="2.30.42.10">
    <property type="match status" value="3"/>
</dbReference>
<dbReference type="InterPro" id="IPR030237">
    <property type="entry name" value="Harmonin_N"/>
</dbReference>
<dbReference type="InterPro" id="IPR001478">
    <property type="entry name" value="PDZ"/>
</dbReference>
<dbReference type="InterPro" id="IPR036034">
    <property type="entry name" value="PDZ_sf"/>
</dbReference>
<dbReference type="InterPro" id="IPR051844">
    <property type="entry name" value="USH2_Complex_Protein"/>
</dbReference>
<dbReference type="PANTHER" id="PTHR23116:SF36">
    <property type="entry name" value="HARMONIN"/>
    <property type="match status" value="1"/>
</dbReference>
<dbReference type="PANTHER" id="PTHR23116">
    <property type="entry name" value="PDZ DOMAIN CONTAINING WHIRLIN AND HARMONIN-RELATED"/>
    <property type="match status" value="1"/>
</dbReference>
<dbReference type="Pfam" id="PF00595">
    <property type="entry name" value="PDZ"/>
    <property type="match status" value="3"/>
</dbReference>
<dbReference type="Pfam" id="PF21219">
    <property type="entry name" value="USH1C_N"/>
    <property type="match status" value="1"/>
</dbReference>
<dbReference type="SMART" id="SM00228">
    <property type="entry name" value="PDZ"/>
    <property type="match status" value="3"/>
</dbReference>
<dbReference type="SUPFAM" id="SSF50156">
    <property type="entry name" value="PDZ domain-like"/>
    <property type="match status" value="3"/>
</dbReference>
<dbReference type="PROSITE" id="PS50106">
    <property type="entry name" value="PDZ"/>
    <property type="match status" value="3"/>
</dbReference>
<keyword id="KW-0002">3D-structure</keyword>
<keyword id="KW-0025">Alternative splicing</keyword>
<keyword id="KW-0966">Cell projection</keyword>
<keyword id="KW-0175">Coiled coil</keyword>
<keyword id="KW-0963">Cytoplasm</keyword>
<keyword id="KW-0206">Cytoskeleton</keyword>
<keyword id="KW-0209">Deafness</keyword>
<keyword id="KW-0221">Differentiation</keyword>
<keyword id="KW-1009">Hearing</keyword>
<keyword id="KW-1010">Non-syndromic deafness</keyword>
<keyword id="KW-0597">Phosphoprotein</keyword>
<keyword id="KW-1267">Proteomics identification</keyword>
<keyword id="KW-1185">Reference proteome</keyword>
<keyword id="KW-0677">Repeat</keyword>
<keyword id="KW-0682">Retinitis pigmentosa</keyword>
<keyword id="KW-0836">Usher syndrome</keyword>
<evidence type="ECO:0000250" key="1">
    <source>
        <dbReference type="UniProtKB" id="Q9ES64"/>
    </source>
</evidence>
<evidence type="ECO:0000255" key="2"/>
<evidence type="ECO:0000255" key="3">
    <source>
        <dbReference type="PROSITE-ProRule" id="PRU00143"/>
    </source>
</evidence>
<evidence type="ECO:0000256" key="4">
    <source>
        <dbReference type="SAM" id="MobiDB-lite"/>
    </source>
</evidence>
<evidence type="ECO:0000269" key="5">
    <source>
    </source>
</evidence>
<evidence type="ECO:0000269" key="6">
    <source>
    </source>
</evidence>
<evidence type="ECO:0000269" key="7">
    <source>
    </source>
</evidence>
<evidence type="ECO:0000269" key="8">
    <source>
    </source>
</evidence>
<evidence type="ECO:0000269" key="9">
    <source>
    </source>
</evidence>
<evidence type="ECO:0000269" key="10">
    <source>
    </source>
</evidence>
<evidence type="ECO:0000269" key="11">
    <source>
    </source>
</evidence>
<evidence type="ECO:0000269" key="12">
    <source>
    </source>
</evidence>
<evidence type="ECO:0000269" key="13">
    <source>
    </source>
</evidence>
<evidence type="ECO:0000269" key="14">
    <source>
    </source>
</evidence>
<evidence type="ECO:0000269" key="15">
    <source>
    </source>
</evidence>
<evidence type="ECO:0000269" key="16">
    <source>
    </source>
</evidence>
<evidence type="ECO:0000269" key="17">
    <source>
    </source>
</evidence>
<evidence type="ECO:0000269" key="18">
    <source>
    </source>
</evidence>
<evidence type="ECO:0000269" key="19">
    <source>
    </source>
</evidence>
<evidence type="ECO:0000269" key="20">
    <source>
    </source>
</evidence>
<evidence type="ECO:0000303" key="21">
    <source>
    </source>
</evidence>
<evidence type="ECO:0000303" key="22">
    <source>
    </source>
</evidence>
<evidence type="ECO:0000303" key="23">
    <source>
    </source>
</evidence>
<evidence type="ECO:0000305" key="24"/>
<evidence type="ECO:0000305" key="25">
    <source>
    </source>
</evidence>
<evidence type="ECO:0000305" key="26">
    <source>
    </source>
</evidence>
<evidence type="ECO:0007829" key="27">
    <source>
        <dbReference type="PDB" id="1X5N"/>
    </source>
</evidence>
<evidence type="ECO:0007829" key="28">
    <source>
        <dbReference type="PDB" id="2KBS"/>
    </source>
</evidence>
<evidence type="ECO:0007829" key="29">
    <source>
        <dbReference type="PDB" id="3K1R"/>
    </source>
</evidence>
<evidence type="ECO:0007829" key="30">
    <source>
        <dbReference type="PDB" id="5XBF"/>
    </source>
</evidence>
<evidence type="ECO:0007829" key="31">
    <source>
        <dbReference type="PDB" id="7X2E"/>
    </source>
</evidence>
<gene>
    <name type="primary">USH1C</name>
    <name type="synonym">AIE75</name>
</gene>
<feature type="chain" id="PRO_0000065727" description="Harmonin">
    <location>
        <begin position="1"/>
        <end position="552"/>
    </location>
</feature>
<feature type="domain" description="PDZ 1" evidence="3">
    <location>
        <begin position="87"/>
        <end position="169"/>
    </location>
</feature>
<feature type="domain" description="PDZ 2" evidence="3">
    <location>
        <begin position="211"/>
        <end position="293"/>
    </location>
</feature>
<feature type="domain" description="PDZ 3" evidence="3">
    <location>
        <begin position="452"/>
        <end position="537"/>
    </location>
</feature>
<feature type="region of interest" description="N-terminal domain" evidence="14">
    <location>
        <begin position="1"/>
        <end position="86"/>
    </location>
</feature>
<feature type="region of interest" description="Mediates interaction with MYO7B" evidence="17 18">
    <location>
        <begin position="194"/>
        <end position="552"/>
    </location>
</feature>
<feature type="region of interest" description="Disordered" evidence="4">
    <location>
        <begin position="401"/>
        <end position="427"/>
    </location>
</feature>
<feature type="coiled-coil region" evidence="2">
    <location>
        <begin position="310"/>
        <end position="377"/>
    </location>
</feature>
<feature type="compositionally biased region" description="Acidic residues" evidence="4">
    <location>
        <begin position="408"/>
        <end position="427"/>
    </location>
</feature>
<feature type="modified residue" description="Phosphoserine" evidence="1">
    <location>
        <position position="219"/>
    </location>
</feature>
<feature type="splice variant" id="VSP_003789" description="In isoform 2." evidence="21">
    <location>
        <begin position="1"/>
        <end position="31"/>
    </location>
</feature>
<feature type="splice variant" id="VSP_007422" description="In isoform 4." evidence="22">
    <location>
        <begin position="274"/>
        <end position="292"/>
    </location>
</feature>
<feature type="splice variant" id="VSP_003790" description="In isoform 3." evidence="23">
    <location>
        <begin position="404"/>
        <end position="552"/>
    </location>
</feature>
<feature type="splice variant" id="VSP_043520" description="In isoform 5." evidence="24">
    <original>YDQGVEPELEPADDLDGGTEEQGE</original>
    <variation>SFGWFYRYDGKFPTIRKKGKDKKKAKYGSLQDLRKNKKELEFEQKLYKEKEEMLEKEKQLKINRLAQEVSETEREDLEESEKIQYWVERLCQTRLEQISSADNEISEMTTGPPPPPPSVSPLAPPLRRFAGGLHLHTTDLDDIPLDMFYYPPKTPSALPVMPHPPPSNPPHKVPAPPVLPLSGHVSASSSPWVQRTPPPIPIPPPPSVPTQDLTPTRPLPSALEEALSNHPFRTGDTGNPVEDWEAKNHSGKPTNSPVPEQSFPPTPKTFCPSPQPPRGPGVSTISKPVMVHQEPNFIYRPAVKSEVLPQEMLKRMVVYQTAFR</variation>
    <location>
        <begin position="404"/>
        <end position="427"/>
    </location>
</feature>
<feature type="splice variant" id="VSP_043521" description="In isoform 5." evidence="24">
    <original>TFF</original>
    <variation>ASLPSSVAESPQPVRKLLEDRAAVHRHGFLLQLEPTDLLLKSKRGNQIHR</variation>
    <location>
        <begin position="550"/>
        <end position="552"/>
    </location>
</feature>
<feature type="sequence variant" id="VAR_012320" description="In dbSNP:rs1064074." evidence="9 10 20">
    <original>E</original>
    <variation>D</variation>
    <location>
        <position position="519"/>
    </location>
</feature>
<feature type="mutagenesis site" description="Strongly reduced affinity for USH1G." evidence="14">
    <original>R</original>
    <variation>H</variation>
    <location>
        <position position="103"/>
    </location>
</feature>
<feature type="sequence conflict" description="In Ref. 2; BAA81739." evidence="24" ref="2">
    <original>R</original>
    <variation>S</variation>
    <location>
        <position position="103"/>
    </location>
</feature>
<feature type="sequence conflict" description="In Ref. 1; AAC18049/AAC18048." evidence="24" ref="1">
    <original>S</original>
    <variation>N</variation>
    <location>
        <position position="280"/>
    </location>
</feature>
<feature type="sequence conflict" description="In Ref. 2; BAA81739." evidence="24" ref="2">
    <original>A</original>
    <variation>T</variation>
    <location>
        <position position="305"/>
    </location>
</feature>
<feature type="helix" evidence="29">
    <location>
        <begin position="2"/>
        <end position="16"/>
    </location>
</feature>
<feature type="helix" evidence="29">
    <location>
        <begin position="20"/>
        <end position="36"/>
    </location>
</feature>
<feature type="helix" evidence="29">
    <location>
        <begin position="39"/>
        <end position="46"/>
    </location>
</feature>
<feature type="turn" evidence="29">
    <location>
        <begin position="47"/>
        <end position="49"/>
    </location>
</feature>
<feature type="helix" evidence="29">
    <location>
        <begin position="53"/>
        <end position="56"/>
    </location>
</feature>
<feature type="helix" evidence="29">
    <location>
        <begin position="57"/>
        <end position="62"/>
    </location>
</feature>
<feature type="helix" evidence="29">
    <location>
        <begin position="63"/>
        <end position="65"/>
    </location>
</feature>
<feature type="helix" evidence="29">
    <location>
        <begin position="68"/>
        <end position="70"/>
    </location>
</feature>
<feature type="helix" evidence="29">
    <location>
        <begin position="71"/>
        <end position="77"/>
    </location>
</feature>
<feature type="strand" evidence="29">
    <location>
        <begin position="86"/>
        <end position="91"/>
    </location>
</feature>
<feature type="strand" evidence="29">
    <location>
        <begin position="100"/>
        <end position="105"/>
    </location>
</feature>
<feature type="helix" evidence="29">
    <location>
        <begin position="106"/>
        <end position="108"/>
    </location>
</feature>
<feature type="strand" evidence="29">
    <location>
        <begin position="110"/>
        <end position="117"/>
    </location>
</feature>
<feature type="helix" evidence="29">
    <location>
        <begin position="122"/>
        <end position="125"/>
    </location>
</feature>
<feature type="strand" evidence="29">
    <location>
        <begin position="132"/>
        <end position="137"/>
    </location>
</feature>
<feature type="helix" evidence="29">
    <location>
        <begin position="147"/>
        <end position="154"/>
    </location>
</feature>
<feature type="strand" evidence="29">
    <location>
        <begin position="156"/>
        <end position="166"/>
    </location>
</feature>
<feature type="strand" evidence="29">
    <location>
        <begin position="169"/>
        <end position="172"/>
    </location>
</feature>
<feature type="strand" evidence="29">
    <location>
        <begin position="181"/>
        <end position="184"/>
    </location>
</feature>
<feature type="helix" evidence="29">
    <location>
        <begin position="185"/>
        <end position="191"/>
    </location>
</feature>
<feature type="strand" evidence="31">
    <location>
        <begin position="210"/>
        <end position="214"/>
    </location>
</feature>
<feature type="strand" evidence="28">
    <location>
        <begin position="217"/>
        <end position="220"/>
    </location>
</feature>
<feature type="strand" evidence="31">
    <location>
        <begin position="223"/>
        <end position="228"/>
    </location>
</feature>
<feature type="strand" evidence="27">
    <location>
        <begin position="231"/>
        <end position="233"/>
    </location>
</feature>
<feature type="strand" evidence="31">
    <location>
        <begin position="235"/>
        <end position="241"/>
    </location>
</feature>
<feature type="helix" evidence="31">
    <location>
        <begin position="246"/>
        <end position="249"/>
    </location>
</feature>
<feature type="strand" evidence="31">
    <location>
        <begin position="257"/>
        <end position="261"/>
    </location>
</feature>
<feature type="helix" evidence="31">
    <location>
        <begin position="271"/>
        <end position="278"/>
    </location>
</feature>
<feature type="strand" evidence="31">
    <location>
        <begin position="282"/>
        <end position="289"/>
    </location>
</feature>
<feature type="turn" evidence="31">
    <location>
        <begin position="290"/>
        <end position="293"/>
    </location>
</feature>
<feature type="helix" evidence="31">
    <location>
        <begin position="294"/>
        <end position="297"/>
    </location>
</feature>
<feature type="helix" evidence="31">
    <location>
        <begin position="300"/>
        <end position="367"/>
    </location>
</feature>
<feature type="helix" evidence="30">
    <location>
        <begin position="439"/>
        <end position="441"/>
    </location>
</feature>
<feature type="helix" evidence="30">
    <location>
        <begin position="445"/>
        <end position="448"/>
    </location>
</feature>
<feature type="strand" evidence="30">
    <location>
        <begin position="453"/>
        <end position="459"/>
    </location>
</feature>
<feature type="strand" evidence="30">
    <location>
        <begin position="466"/>
        <end position="471"/>
    </location>
</feature>
<feature type="strand" evidence="30">
    <location>
        <begin position="478"/>
        <end position="484"/>
    </location>
</feature>
<feature type="helix" evidence="30">
    <location>
        <begin position="489"/>
        <end position="493"/>
    </location>
</feature>
<feature type="strand" evidence="30">
    <location>
        <begin position="501"/>
        <end position="505"/>
    </location>
</feature>
<feature type="helix" evidence="30">
    <location>
        <begin position="515"/>
        <end position="527"/>
    </location>
</feature>
<feature type="strand" evidence="30">
    <location>
        <begin position="528"/>
        <end position="538"/>
    </location>
</feature>
<protein>
    <recommendedName>
        <fullName>Harmonin</fullName>
    </recommendedName>
    <alternativeName>
        <fullName>Antigen NY-CO-38/NY-CO-37</fullName>
    </alternativeName>
    <alternativeName>
        <fullName>Autoimmune enteropathy-related antigen AIE-75</fullName>
    </alternativeName>
    <alternativeName>
        <fullName>Protein PDZ-73</fullName>
    </alternativeName>
    <alternativeName>
        <fullName>Renal carcinoma antigen NY-REN-3</fullName>
    </alternativeName>
    <alternativeName>
        <fullName>Usher syndrome type-1C protein</fullName>
    </alternativeName>
</protein>
<accession>Q9Y6N9</accession>
<accession>A8K423</accession>
<accession>Q7RTU8</accession>
<accession>Q96B29</accession>
<accession>Q9UM04</accession>
<accession>Q9UM17</accession>
<accession>Q9UPC3</accession>